<keyword id="KW-0997">Cell inner membrane</keyword>
<keyword id="KW-1003">Cell membrane</keyword>
<keyword id="KW-0406">Ion transport</keyword>
<keyword id="KW-0472">Membrane</keyword>
<keyword id="KW-0630">Potassium</keyword>
<keyword id="KW-0633">Potassium transport</keyword>
<keyword id="KW-0812">Transmembrane</keyword>
<keyword id="KW-1133">Transmembrane helix</keyword>
<keyword id="KW-0813">Transport</keyword>
<evidence type="ECO:0000255" key="1">
    <source>
        <dbReference type="HAMAP-Rule" id="MF_00275"/>
    </source>
</evidence>
<dbReference type="EMBL" id="CP000975">
    <property type="protein sequence ID" value="ACD82095.1"/>
    <property type="molecule type" value="Genomic_DNA"/>
</dbReference>
<dbReference type="RefSeq" id="WP_012462377.1">
    <property type="nucleotide sequence ID" value="NC_010794.1"/>
</dbReference>
<dbReference type="SMR" id="B3DWK0"/>
<dbReference type="STRING" id="481448.Minf_0035"/>
<dbReference type="KEGG" id="min:Minf_0035"/>
<dbReference type="eggNOG" id="COG2060">
    <property type="taxonomic scope" value="Bacteria"/>
</dbReference>
<dbReference type="HOGENOM" id="CLU_018614_3_0_0"/>
<dbReference type="OrthoDB" id="9763796at2"/>
<dbReference type="Proteomes" id="UP000009149">
    <property type="component" value="Chromosome"/>
</dbReference>
<dbReference type="GO" id="GO:0005886">
    <property type="term" value="C:plasma membrane"/>
    <property type="evidence" value="ECO:0007669"/>
    <property type="project" value="UniProtKB-SubCell"/>
</dbReference>
<dbReference type="GO" id="GO:0008556">
    <property type="term" value="F:P-type potassium transmembrane transporter activity"/>
    <property type="evidence" value="ECO:0007669"/>
    <property type="project" value="InterPro"/>
</dbReference>
<dbReference type="GO" id="GO:0030955">
    <property type="term" value="F:potassium ion binding"/>
    <property type="evidence" value="ECO:0007669"/>
    <property type="project" value="UniProtKB-UniRule"/>
</dbReference>
<dbReference type="HAMAP" id="MF_00275">
    <property type="entry name" value="KdpA"/>
    <property type="match status" value="1"/>
</dbReference>
<dbReference type="InterPro" id="IPR004623">
    <property type="entry name" value="KdpA"/>
</dbReference>
<dbReference type="NCBIfam" id="TIGR00680">
    <property type="entry name" value="kdpA"/>
    <property type="match status" value="1"/>
</dbReference>
<dbReference type="PANTHER" id="PTHR30607">
    <property type="entry name" value="POTASSIUM-TRANSPORTING ATPASE A CHAIN"/>
    <property type="match status" value="1"/>
</dbReference>
<dbReference type="PANTHER" id="PTHR30607:SF2">
    <property type="entry name" value="POTASSIUM-TRANSPORTING ATPASE POTASSIUM-BINDING SUBUNIT"/>
    <property type="match status" value="1"/>
</dbReference>
<dbReference type="Pfam" id="PF03814">
    <property type="entry name" value="KdpA"/>
    <property type="match status" value="1"/>
</dbReference>
<dbReference type="PIRSF" id="PIRSF001294">
    <property type="entry name" value="K_ATPaseA"/>
    <property type="match status" value="1"/>
</dbReference>
<name>KDPA_METI4</name>
<accession>B3DWK0</accession>
<comment type="function">
    <text evidence="1">Part of the high-affinity ATP-driven potassium transport (or Kdp) system, which catalyzes the hydrolysis of ATP coupled with the electrogenic transport of potassium into the cytoplasm. This subunit binds the periplasmic potassium ions and delivers the ions to the membrane domain of KdpB through an intramembrane tunnel.</text>
</comment>
<comment type="subunit">
    <text evidence="1">The system is composed of three essential subunits: KdpA, KdpB and KdpC.</text>
</comment>
<comment type="subcellular location">
    <subcellularLocation>
        <location evidence="1">Cell inner membrane</location>
        <topology evidence="1">Multi-pass membrane protein</topology>
    </subcellularLocation>
</comment>
<comment type="similarity">
    <text evidence="1">Belongs to the KdpA family.</text>
</comment>
<reference key="1">
    <citation type="journal article" date="2008" name="Biol. Direct">
        <title>Complete genome sequence of the extremely acidophilic methanotroph isolate V4, Methylacidiphilum infernorum, a representative of the bacterial phylum Verrucomicrobia.</title>
        <authorList>
            <person name="Hou S."/>
            <person name="Makarova K.S."/>
            <person name="Saw J.H."/>
            <person name="Senin P."/>
            <person name="Ly B.V."/>
            <person name="Zhou Z."/>
            <person name="Ren Y."/>
            <person name="Wang J."/>
            <person name="Galperin M.Y."/>
            <person name="Omelchenko M.V."/>
            <person name="Wolf Y.I."/>
            <person name="Yutin N."/>
            <person name="Koonin E.V."/>
            <person name="Stott M.B."/>
            <person name="Mountain B.W."/>
            <person name="Crowe M.A."/>
            <person name="Smirnova A.V."/>
            <person name="Dunfield P.F."/>
            <person name="Feng L."/>
            <person name="Wang L."/>
            <person name="Alam M."/>
        </authorList>
    </citation>
    <scope>NUCLEOTIDE SEQUENCE [LARGE SCALE GENOMIC DNA]</scope>
    <source>
        <strain>Isolate V4</strain>
    </source>
</reference>
<feature type="chain" id="PRO_1000114690" description="Potassium-transporting ATPase potassium-binding subunit">
    <location>
        <begin position="1"/>
        <end position="574"/>
    </location>
</feature>
<feature type="transmembrane region" description="Helical" evidence="1">
    <location>
        <begin position="7"/>
        <end position="27"/>
    </location>
</feature>
<feature type="transmembrane region" description="Helical" evidence="1">
    <location>
        <begin position="65"/>
        <end position="85"/>
    </location>
</feature>
<feature type="transmembrane region" description="Helical" evidence="1">
    <location>
        <begin position="136"/>
        <end position="156"/>
    </location>
</feature>
<feature type="transmembrane region" description="Helical" evidence="1">
    <location>
        <begin position="175"/>
        <end position="195"/>
    </location>
</feature>
<feature type="transmembrane region" description="Helical" evidence="1">
    <location>
        <begin position="264"/>
        <end position="284"/>
    </location>
</feature>
<feature type="transmembrane region" description="Helical" evidence="1">
    <location>
        <begin position="292"/>
        <end position="312"/>
    </location>
</feature>
<feature type="transmembrane region" description="Helical" evidence="1">
    <location>
        <begin position="390"/>
        <end position="410"/>
    </location>
</feature>
<feature type="transmembrane region" description="Helical" evidence="1">
    <location>
        <begin position="427"/>
        <end position="447"/>
    </location>
</feature>
<feature type="transmembrane region" description="Helical" evidence="1">
    <location>
        <begin position="494"/>
        <end position="514"/>
    </location>
</feature>
<feature type="transmembrane region" description="Helical" evidence="1">
    <location>
        <begin position="534"/>
        <end position="554"/>
    </location>
</feature>
<proteinExistence type="inferred from homology"/>
<protein>
    <recommendedName>
        <fullName evidence="1">Potassium-transporting ATPase potassium-binding subunit</fullName>
    </recommendedName>
    <alternativeName>
        <fullName evidence="1">ATP phosphohydrolase [potassium-transporting] A chain</fullName>
    </alternativeName>
    <alternativeName>
        <fullName evidence="1">Potassium-binding and translocating subunit A</fullName>
    </alternativeName>
    <alternativeName>
        <fullName evidence="1">Potassium-translocating ATPase A chain</fullName>
    </alternativeName>
</protein>
<sequence>MNTSPGIELGLFIALLAVLNIPLGTHLYKVLDKEGKTVFDPILKPLENLTYKLCSIDRSKEQSWIEYAVGLLCFNFVGILVSYLILRLQSILPLNPEKIGPMAPHIAFNTAISFATNTNWQSYVPEKQVSYFAQMFGLAVPNFTSAATGIAAAAALVRGIVRTEMKTVGNCWVDLIRIHYYLLLPLSLFIAIILLSQGVPQNFNAYVSYIPLELKSSLANLPVKLPQGPIASQEAIKLLGTNGGGFLNANSAHPYENPTPLSNFVEMLSIFLIPSALTYYFGLSCKKLGHGWSIWLTMTFCFLILTLSCFIFEQAGNPLFSSLGIKNQLNMEGKEMRFGIFDSSFFASVTTLASCGAVNSLHDSFQPLAGMIPLFNMGLGELIFGGVGSGLYGILLFVILSVFLFGLMIGRTPGYLGKRIGSYEIKMAVLALMIQYVLILGLSALALNSSWGTAALGNKGPHGLTEVLYAFTSTTENNGSAFGGLNATSKPFALLLGVAMFLGRYFVLIPILAIAGSLANQKRYASQTVFPTGGWLFIFVLGATIFLLAALNFFPALTVGPILEHFMIGMGKSF</sequence>
<organism>
    <name type="scientific">Methylacidiphilum infernorum (isolate V4)</name>
    <name type="common">Methylokorus infernorum (strain V4)</name>
    <dbReference type="NCBI Taxonomy" id="481448"/>
    <lineage>
        <taxon>Bacteria</taxon>
        <taxon>Pseudomonadati</taxon>
        <taxon>Verrucomicrobiota</taxon>
        <taxon>Methylacidiphilae</taxon>
        <taxon>Methylacidiphilales</taxon>
        <taxon>Methylacidiphilaceae</taxon>
        <taxon>Methylacidiphilum (ex Ratnadevi et al. 2023)</taxon>
    </lineage>
</organism>
<gene>
    <name evidence="1" type="primary">kdpA</name>
    <name type="ordered locus">Minf_0035</name>
</gene>